<evidence type="ECO:0000255" key="1">
    <source>
        <dbReference type="HAMAP-Rule" id="MF_01568"/>
    </source>
</evidence>
<dbReference type="EC" id="3.6.1.15" evidence="1"/>
<dbReference type="EC" id="3.6.1.6" evidence="1"/>
<dbReference type="EMBL" id="CP000001">
    <property type="protein sequence ID" value="AAU19805.1"/>
    <property type="molecule type" value="Genomic_DNA"/>
</dbReference>
<dbReference type="RefSeq" id="WP_000506628.1">
    <property type="nucleotide sequence ID" value="NZ_CP009968.1"/>
</dbReference>
<dbReference type="SMR" id="Q63GB8"/>
<dbReference type="KEGG" id="bcz:BCE33L0434"/>
<dbReference type="PATRIC" id="fig|288681.22.peg.5164"/>
<dbReference type="Proteomes" id="UP000002612">
    <property type="component" value="Chromosome"/>
</dbReference>
<dbReference type="GO" id="GO:0000287">
    <property type="term" value="F:magnesium ion binding"/>
    <property type="evidence" value="ECO:0007669"/>
    <property type="project" value="UniProtKB-UniRule"/>
</dbReference>
<dbReference type="GO" id="GO:0017110">
    <property type="term" value="F:nucleoside diphosphate phosphatase activity"/>
    <property type="evidence" value="ECO:0007669"/>
    <property type="project" value="UniProtKB-UniRule"/>
</dbReference>
<dbReference type="GO" id="GO:0017111">
    <property type="term" value="F:ribonucleoside triphosphate phosphatase activity"/>
    <property type="evidence" value="ECO:0007669"/>
    <property type="project" value="UniProtKB-UniRule"/>
</dbReference>
<dbReference type="Gene3D" id="2.40.380.10">
    <property type="entry name" value="FomD-like"/>
    <property type="match status" value="1"/>
</dbReference>
<dbReference type="HAMAP" id="MF_01568">
    <property type="entry name" value="Ntdp"/>
    <property type="match status" value="1"/>
</dbReference>
<dbReference type="InterPro" id="IPR007295">
    <property type="entry name" value="DUF402"/>
</dbReference>
<dbReference type="InterPro" id="IPR035930">
    <property type="entry name" value="FomD-like_sf"/>
</dbReference>
<dbReference type="InterPro" id="IPR050212">
    <property type="entry name" value="Ntdp-like"/>
</dbReference>
<dbReference type="InterPro" id="IPR016882">
    <property type="entry name" value="SA1684"/>
</dbReference>
<dbReference type="NCBIfam" id="NF010183">
    <property type="entry name" value="PRK13662.1"/>
    <property type="match status" value="1"/>
</dbReference>
<dbReference type="PANTHER" id="PTHR39159">
    <property type="match status" value="1"/>
</dbReference>
<dbReference type="PANTHER" id="PTHR39159:SF1">
    <property type="entry name" value="UPF0374 PROTEIN YGAC"/>
    <property type="match status" value="1"/>
</dbReference>
<dbReference type="Pfam" id="PF04167">
    <property type="entry name" value="DUF402"/>
    <property type="match status" value="1"/>
</dbReference>
<dbReference type="PIRSF" id="PIRSF028345">
    <property type="entry name" value="UCP028345"/>
    <property type="match status" value="1"/>
</dbReference>
<dbReference type="SUPFAM" id="SSF159234">
    <property type="entry name" value="FomD-like"/>
    <property type="match status" value="1"/>
</dbReference>
<proteinExistence type="inferred from homology"/>
<sequence length="176" mass="21009">MGFPKEGEKVQIHSYKHNGSIHRMWEETTILKGTQSLVIGANDRTVVTESDGRTWITREPAICYFHANYWFNVIGMLREEGVYYYCNLSSPFAYDSEALKYIDYDLDIKVYPDMTYTLLDEDEYEKHSQIMQYPPVIDTILKRNVAQLTQWIHQRKGPFAPDFVDMWYERYLMYRN</sequence>
<organism>
    <name type="scientific">Bacillus cereus (strain ZK / E33L)</name>
    <dbReference type="NCBI Taxonomy" id="288681"/>
    <lineage>
        <taxon>Bacteria</taxon>
        <taxon>Bacillati</taxon>
        <taxon>Bacillota</taxon>
        <taxon>Bacilli</taxon>
        <taxon>Bacillales</taxon>
        <taxon>Bacillaceae</taxon>
        <taxon>Bacillus</taxon>
        <taxon>Bacillus cereus group</taxon>
    </lineage>
</organism>
<feature type="chain" id="PRO_0000248087" description="Nucleoside triphosphate/diphosphate phosphatase">
    <location>
        <begin position="1"/>
        <end position="176"/>
    </location>
</feature>
<feature type="active site" description="Proton donor" evidence="1">
    <location>
        <position position="23"/>
    </location>
</feature>
<feature type="binding site" evidence="1">
    <location>
        <position position="87"/>
    </location>
    <ligand>
        <name>Mg(2+)</name>
        <dbReference type="ChEBI" id="CHEBI:18420"/>
        <label>1</label>
    </ligand>
</feature>
<feature type="binding site" evidence="1">
    <location>
        <position position="103"/>
    </location>
    <ligand>
        <name>Mg(2+)</name>
        <dbReference type="ChEBI" id="CHEBI:18420"/>
        <label>1</label>
    </ligand>
</feature>
<feature type="binding site" evidence="1">
    <location>
        <position position="105"/>
    </location>
    <ligand>
        <name>Mg(2+)</name>
        <dbReference type="ChEBI" id="CHEBI:18420"/>
        <label>2</label>
    </ligand>
</feature>
<feature type="binding site" evidence="1">
    <location>
        <position position="107"/>
    </location>
    <ligand>
        <name>Mg(2+)</name>
        <dbReference type="ChEBI" id="CHEBI:18420"/>
        <label>1</label>
    </ligand>
</feature>
<feature type="binding site" evidence="1">
    <location>
        <position position="107"/>
    </location>
    <ligand>
        <name>Mg(2+)</name>
        <dbReference type="ChEBI" id="CHEBI:18420"/>
        <label>2</label>
    </ligand>
</feature>
<feature type="binding site" evidence="1">
    <location>
        <position position="120"/>
    </location>
    <ligand>
        <name>Mg(2+)</name>
        <dbReference type="ChEBI" id="CHEBI:18420"/>
        <label>2</label>
    </ligand>
</feature>
<feature type="binding site" evidence="1">
    <location>
        <position position="123"/>
    </location>
    <ligand>
        <name>Mg(2+)</name>
        <dbReference type="ChEBI" id="CHEBI:18420"/>
        <label>2</label>
    </ligand>
</feature>
<reference key="1">
    <citation type="journal article" date="2006" name="J. Bacteriol.">
        <title>Pathogenomic sequence analysis of Bacillus cereus and Bacillus thuringiensis isolates closely related to Bacillus anthracis.</title>
        <authorList>
            <person name="Han C.S."/>
            <person name="Xie G."/>
            <person name="Challacombe J.F."/>
            <person name="Altherr M.R."/>
            <person name="Bhotika S.S."/>
            <person name="Bruce D."/>
            <person name="Campbell C.S."/>
            <person name="Campbell M.L."/>
            <person name="Chen J."/>
            <person name="Chertkov O."/>
            <person name="Cleland C."/>
            <person name="Dimitrijevic M."/>
            <person name="Doggett N.A."/>
            <person name="Fawcett J.J."/>
            <person name="Glavina T."/>
            <person name="Goodwin L.A."/>
            <person name="Hill K.K."/>
            <person name="Hitchcock P."/>
            <person name="Jackson P.J."/>
            <person name="Keim P."/>
            <person name="Kewalramani A.R."/>
            <person name="Longmire J."/>
            <person name="Lucas S."/>
            <person name="Malfatti S."/>
            <person name="McMurry K."/>
            <person name="Meincke L.J."/>
            <person name="Misra M."/>
            <person name="Moseman B.L."/>
            <person name="Mundt M."/>
            <person name="Munk A.C."/>
            <person name="Okinaka R.T."/>
            <person name="Parson-Quintana B."/>
            <person name="Reilly L.P."/>
            <person name="Richardson P."/>
            <person name="Robinson D.L."/>
            <person name="Rubin E."/>
            <person name="Saunders E."/>
            <person name="Tapia R."/>
            <person name="Tesmer J.G."/>
            <person name="Thayer N."/>
            <person name="Thompson L.S."/>
            <person name="Tice H."/>
            <person name="Ticknor L.O."/>
            <person name="Wills P.L."/>
            <person name="Brettin T.S."/>
            <person name="Gilna P."/>
        </authorList>
    </citation>
    <scope>NUCLEOTIDE SEQUENCE [LARGE SCALE GENOMIC DNA]</scope>
    <source>
        <strain>ZK / E33L</strain>
    </source>
</reference>
<name>NTDP_BACCZ</name>
<keyword id="KW-0378">Hydrolase</keyword>
<keyword id="KW-0460">Magnesium</keyword>
<keyword id="KW-0479">Metal-binding</keyword>
<accession>Q63GB8</accession>
<protein>
    <recommendedName>
        <fullName evidence="1">Nucleoside triphosphate/diphosphate phosphatase</fullName>
        <ecNumber evidence="1">3.6.1.15</ecNumber>
        <ecNumber evidence="1">3.6.1.6</ecNumber>
    </recommendedName>
</protein>
<comment type="function">
    <text evidence="1">Has nucleoside phosphatase activity towards nucleoside triphosphates and nucleoside diphosphates.</text>
</comment>
<comment type="catalytic activity">
    <reaction evidence="1">
        <text>a ribonucleoside 5'-triphosphate + H2O = a ribonucleoside 5'-diphosphate + phosphate + H(+)</text>
        <dbReference type="Rhea" id="RHEA:23680"/>
        <dbReference type="ChEBI" id="CHEBI:15377"/>
        <dbReference type="ChEBI" id="CHEBI:15378"/>
        <dbReference type="ChEBI" id="CHEBI:43474"/>
        <dbReference type="ChEBI" id="CHEBI:57930"/>
        <dbReference type="ChEBI" id="CHEBI:61557"/>
        <dbReference type="EC" id="3.6.1.15"/>
    </reaction>
</comment>
<comment type="catalytic activity">
    <reaction evidence="1">
        <text>a ribonucleoside 5'-diphosphate + H2O = a ribonucleoside 5'-phosphate + phosphate + H(+)</text>
        <dbReference type="Rhea" id="RHEA:36799"/>
        <dbReference type="ChEBI" id="CHEBI:15377"/>
        <dbReference type="ChEBI" id="CHEBI:15378"/>
        <dbReference type="ChEBI" id="CHEBI:43474"/>
        <dbReference type="ChEBI" id="CHEBI:57930"/>
        <dbReference type="ChEBI" id="CHEBI:58043"/>
        <dbReference type="EC" id="3.6.1.6"/>
    </reaction>
</comment>
<comment type="cofactor">
    <cofactor evidence="1">
        <name>Mg(2+)</name>
        <dbReference type="ChEBI" id="CHEBI:18420"/>
    </cofactor>
</comment>
<comment type="similarity">
    <text evidence="1">Belongs to the Ntdp family.</text>
</comment>
<gene>
    <name type="ordered locus">BCE33L0434</name>
</gene>